<comment type="function">
    <text>This protein is essential for production of active forms of the serine proteinase located in or secreted from the cell envelope.</text>
</comment>
<comment type="catalytic activity">
    <reaction>
        <text>[protein]-peptidylproline (omega=180) = [protein]-peptidylproline (omega=0)</text>
        <dbReference type="Rhea" id="RHEA:16237"/>
        <dbReference type="Rhea" id="RHEA-COMP:10747"/>
        <dbReference type="Rhea" id="RHEA-COMP:10748"/>
        <dbReference type="ChEBI" id="CHEBI:83833"/>
        <dbReference type="ChEBI" id="CHEBI:83834"/>
        <dbReference type="EC" id="5.2.1.8"/>
    </reaction>
</comment>
<comment type="subcellular location">
    <subcellularLocation>
        <location evidence="4">Cell membrane</location>
        <topology evidence="4">Lipid-anchor</topology>
    </subcellularLocation>
</comment>
<comment type="similarity">
    <text evidence="3">Belongs to the PrsA family.</text>
</comment>
<keyword id="KW-1003">Cell membrane</keyword>
<keyword id="KW-0413">Isomerase</keyword>
<keyword id="KW-0449">Lipoprotein</keyword>
<keyword id="KW-0472">Membrane</keyword>
<keyword id="KW-0564">Palmitate</keyword>
<keyword id="KW-0614">Plasmid</keyword>
<keyword id="KW-0697">Rotamase</keyword>
<keyword id="KW-0732">Signal</keyword>
<protein>
    <recommendedName>
        <fullName>Foldase protein PrsA</fullName>
        <ecNumber>5.2.1.8</ecNumber>
    </recommendedName>
    <alternativeName>
        <fullName>Protease maturation protein PrtM</fullName>
    </alternativeName>
</protein>
<geneLocation type="plasmid">
    <name>pLP763</name>
</geneLocation>
<geneLocation type="plasmid">
    <name>pWV05</name>
</geneLocation>
<geneLocation type="plasmid">
    <name>pHP003</name>
</geneLocation>
<accession>P0C2B5</accession>
<accession>P14308</accession>
<accession>P15294</accession>
<accession>Q53962</accession>
<accession>Q9AIQ3</accession>
<proteinExistence type="evidence at protein level"/>
<gene>
    <name type="primary">prsA</name>
    <name type="synonym">prtM</name>
</gene>
<reference key="1">
    <citation type="journal article" date="1989" name="J. Bacteriol.">
        <title>Identification of a gene required for maturation of an extracellular lactococcal serine proteinase.</title>
        <authorList>
            <person name="Haandrikman A.J."/>
            <person name="Kok J."/>
            <person name="Laan H."/>
            <person name="Soemitro S."/>
            <person name="Ledeboer A.M."/>
            <person name="Konings W.N."/>
            <person name="Venema G."/>
        </authorList>
    </citation>
    <scope>NUCLEOTIDE SEQUENCE [GENOMIC DNA]</scope>
    <source>
        <strain>Wg2</strain>
    </source>
</reference>
<reference key="2">
    <citation type="journal article" date="1989" name="Mol. Microbiol.">
        <title>Molecular characterization of a cell wall-associated proteinase gene from Streptococcus lactis NCDO763.</title>
        <authorList>
            <person name="Kiwaki M."/>
            <person name="Ikemura H."/>
            <person name="Shimizu-Kadota M."/>
            <person name="Hirashima A."/>
        </authorList>
    </citation>
    <scope>NUCLEOTIDE SEQUENCE [GENOMIC DNA]</scope>
    <source>
        <strain>NCDO 763 / ML3</strain>
        <plasmid>pLP763</plasmid>
    </source>
</reference>
<reference key="3">
    <citation type="journal article" date="2001" name="J. Appl. Microbiol.">
        <title>Nucleotide sequence and characterization of the cell envelope proteinase plasmid in Lactococcus lactis subsp. cremoris HP.</title>
        <authorList>
            <person name="Christensson C."/>
            <person name="Pillidge C.J."/>
            <person name="Ward L.J."/>
            <person name="O'Toole P.W."/>
        </authorList>
    </citation>
    <scope>NUCLEOTIDE SEQUENCE [GENOMIC DNA]</scope>
    <source>
        <strain>ATCC 19257 / DSM 20069 / BCRC 12586 / JCM 16167 / LMG 6897 / NBRC 100676 / NCDO 607 / NCIMB 8662 / HP</strain>
        <plasmid>pHP003</plasmid>
    </source>
</reference>
<reference key="4">
    <citation type="journal article" date="1988" name="Appl. Environ. Microbiol.">
        <title>Nucleotide sequence of the cell wall proteinase gene of Streptococcus cremoris Wg2.</title>
        <authorList>
            <person name="Kok J."/>
            <person name="Leenhouts K.J."/>
            <person name="Haandrikman A.J."/>
            <person name="Ledeboer A.M."/>
            <person name="Venema G."/>
        </authorList>
    </citation>
    <scope>NUCLEOTIDE SEQUENCE [GENOMIC DNA] OF 1-295</scope>
    <source>
        <strain>Wg2</strain>
        <plasmid>pWV05</plasmid>
    </source>
</reference>
<reference key="5">
    <citation type="journal article" date="1990" name="Appl. Environ. Microbiol.">
        <title>Insertion elements on lactococcal proteinase plasmids.</title>
        <authorList>
            <person name="Haandrikman A.J."/>
            <person name="van Leeuwen C."/>
            <person name="Kok J."/>
            <person name="Vos P."/>
            <person name="de Vos W.M."/>
            <person name="Venema G."/>
        </authorList>
    </citation>
    <scope>NUCLEOTIDE SEQUENCE [GENOMIC DNA] OF 294-299</scope>
    <source>
        <strain>Wg2</strain>
        <plasmid>pWV05</plasmid>
    </source>
</reference>
<reference key="6">
    <citation type="journal article" date="1991" name="J. Bacteriol.">
        <title>Lactococcal proteinase maturation protein PrtM is a lipoprotein.</title>
        <authorList>
            <person name="Haandrikman A.J."/>
            <person name="Kok J."/>
            <person name="Venema G."/>
        </authorList>
    </citation>
    <scope>CHARACTERIZATION</scope>
    <scope>SUBCELLULAR LOCATION</scope>
    <scope>DIACYLGLYCEROL AT CYS-24</scope>
    <scope>PALMITOYLATION AT CYS-24</scope>
    <scope>MUTAGENESIS OF CYS-24</scope>
    <source>
        <strain>Wg2</strain>
    </source>
</reference>
<evidence type="ECO:0000255" key="1"/>
<evidence type="ECO:0000269" key="2">
    <source>
    </source>
</evidence>
<evidence type="ECO:0000305" key="3"/>
<evidence type="ECO:0000305" key="4">
    <source>
    </source>
</evidence>
<name>PRSA_LACLC</name>
<organism>
    <name type="scientific">Lactococcus lactis subsp. cremoris</name>
    <name type="common">Streptococcus cremoris</name>
    <dbReference type="NCBI Taxonomy" id="1359"/>
    <lineage>
        <taxon>Bacteria</taxon>
        <taxon>Bacillati</taxon>
        <taxon>Bacillota</taxon>
        <taxon>Bacilli</taxon>
        <taxon>Lactobacillales</taxon>
        <taxon>Streptococcaceae</taxon>
        <taxon>Lactococcus</taxon>
    </lineage>
</organism>
<feature type="signal peptide" evidence="1">
    <location>
        <begin position="1"/>
        <end position="23"/>
    </location>
</feature>
<feature type="chain" id="PRO_0000029305" description="Foldase protein PrsA">
    <location>
        <begin position="24"/>
        <end position="299"/>
    </location>
</feature>
<feature type="domain" description="PpiC">
    <location>
        <begin position="144"/>
        <end position="236"/>
    </location>
</feature>
<feature type="lipid moiety-binding region" description="N-palmitoyl cysteine" evidence="4">
    <location>
        <position position="24"/>
    </location>
</feature>
<feature type="lipid moiety-binding region" description="S-diacylglycerol cysteine" evidence="4">
    <location>
        <position position="24"/>
    </location>
</feature>
<feature type="mutagenesis site" description="Leads to very low amounts of secreted foldase; it is degraded by PrtP." evidence="2">
    <original>C</original>
    <variation>A</variation>
    <location>
        <position position="24"/>
    </location>
</feature>
<feature type="sequence conflict" description="In Ref. 2 and 3." evidence="3" ref="2 3">
    <original>L</original>
    <variation>F</variation>
    <location>
        <position position="46"/>
    </location>
</feature>
<feature type="sequence conflict" description="In Ref. 4; AAA17676." evidence="3" ref="4">
    <original>N</original>
    <variation>Y</variation>
    <location>
        <position position="83"/>
    </location>
</feature>
<feature type="sequence conflict" description="In Ref. 3; AAK27980." evidence="3" ref="3">
    <original>A</original>
    <variation>S</variation>
    <location>
        <position position="169"/>
    </location>
</feature>
<feature type="sequence conflict" description="In Ref. 3; AAK27980." evidence="3" ref="3">
    <original>A</original>
    <variation>V</variation>
    <location>
        <position position="249"/>
    </location>
</feature>
<feature type="sequence conflict" description="In Ref. 4; AAA17676." evidence="3" ref="4">
    <original>R</original>
    <variation>P</variation>
    <location>
        <position position="267"/>
    </location>
</feature>
<dbReference type="EC" id="5.2.1.8"/>
<dbReference type="EMBL" id="M26694">
    <property type="protein sequence ID" value="AAA60395.1"/>
    <property type="molecule type" value="Genomic_DNA"/>
</dbReference>
<dbReference type="EMBL" id="X14130">
    <property type="protein sequence ID" value="CAA32349.1"/>
    <property type="molecule type" value="Genomic_DNA"/>
</dbReference>
<dbReference type="EMBL" id="AF247159">
    <property type="protein sequence ID" value="AAK27980.1"/>
    <property type="molecule type" value="Genomic_DNA"/>
</dbReference>
<dbReference type="EMBL" id="M24767">
    <property type="protein sequence ID" value="AAA17676.1"/>
    <property type="molecule type" value="Unassigned_DNA"/>
</dbReference>
<dbReference type="PIR" id="S08083">
    <property type="entry name" value="S08083"/>
</dbReference>
<dbReference type="RefSeq" id="NP_858118.1">
    <property type="nucleotide sequence ID" value="NC_004847.1"/>
</dbReference>
<dbReference type="RefSeq" id="WP_015083008.1">
    <property type="nucleotide sequence ID" value="NZ_WJUX01000082.1"/>
</dbReference>
<dbReference type="RefSeq" id="YP_006965817.1">
    <property type="nucleotide sequence ID" value="NC_019377.1"/>
</dbReference>
<dbReference type="SMR" id="P0C2B5"/>
<dbReference type="MEROPS" id="X15.001"/>
<dbReference type="GO" id="GO:0005886">
    <property type="term" value="C:plasma membrane"/>
    <property type="evidence" value="ECO:0007669"/>
    <property type="project" value="UniProtKB-SubCell"/>
</dbReference>
<dbReference type="GO" id="GO:0003755">
    <property type="term" value="F:peptidyl-prolyl cis-trans isomerase activity"/>
    <property type="evidence" value="ECO:0007669"/>
    <property type="project" value="UniProtKB-UniRule"/>
</dbReference>
<dbReference type="GO" id="GO:0006457">
    <property type="term" value="P:protein folding"/>
    <property type="evidence" value="ECO:0007669"/>
    <property type="project" value="UniProtKB-UniRule"/>
</dbReference>
<dbReference type="Gene3D" id="3.10.50.40">
    <property type="match status" value="1"/>
</dbReference>
<dbReference type="HAMAP" id="MF_01145">
    <property type="entry name" value="Foldase_PrsA"/>
    <property type="match status" value="1"/>
</dbReference>
<dbReference type="InterPro" id="IPR023059">
    <property type="entry name" value="Foldase_PrsA"/>
</dbReference>
<dbReference type="InterPro" id="IPR046357">
    <property type="entry name" value="PPIase_dom_sf"/>
</dbReference>
<dbReference type="InterPro" id="IPR000297">
    <property type="entry name" value="PPIase_PpiC"/>
</dbReference>
<dbReference type="InterPro" id="IPR023058">
    <property type="entry name" value="PPIase_PpiC_CS"/>
</dbReference>
<dbReference type="InterPro" id="IPR050245">
    <property type="entry name" value="PrsA_foldase"/>
</dbReference>
<dbReference type="InterPro" id="IPR027304">
    <property type="entry name" value="Trigger_fact/SurA_dom_sf"/>
</dbReference>
<dbReference type="NCBIfam" id="NF003356">
    <property type="entry name" value="PRK04405.1"/>
    <property type="match status" value="1"/>
</dbReference>
<dbReference type="PANTHER" id="PTHR47245:SF1">
    <property type="entry name" value="FOLDASE PROTEIN PRSA"/>
    <property type="match status" value="1"/>
</dbReference>
<dbReference type="PANTHER" id="PTHR47245">
    <property type="entry name" value="PEPTIDYLPROLYL ISOMERASE"/>
    <property type="match status" value="1"/>
</dbReference>
<dbReference type="Pfam" id="PF00639">
    <property type="entry name" value="Rotamase"/>
    <property type="match status" value="1"/>
</dbReference>
<dbReference type="SUPFAM" id="SSF54534">
    <property type="entry name" value="FKBP-like"/>
    <property type="match status" value="1"/>
</dbReference>
<dbReference type="SUPFAM" id="SSF109998">
    <property type="entry name" value="Triger factor/SurA peptide-binding domain-like"/>
    <property type="match status" value="1"/>
</dbReference>
<dbReference type="PROSITE" id="PS01096">
    <property type="entry name" value="PPIC_PPIASE_1"/>
    <property type="match status" value="1"/>
</dbReference>
<dbReference type="PROSITE" id="PS50198">
    <property type="entry name" value="PPIC_PPIASE_2"/>
    <property type="match status" value="1"/>
</dbReference>
<dbReference type="PROSITE" id="PS51257">
    <property type="entry name" value="PROKAR_LIPOPROTEIN"/>
    <property type="match status" value="1"/>
</dbReference>
<sequence length="299" mass="33133">MKKKMRLKVLLASTATALLLLSGCQSNQTDQTVATYSGGKVTESSLYKELKQSPTTKTMLANMLIYRALNHAYGKSVSTKTVNDAYDSYKQQYGENFDAFLSQNGFSRSSFKESLRTNFLSEVALKKLKKVSESQLKAAWKTYQPKVTVQHILTSDEDTAKQVISDLAAGKDFAMLAKTDSIDTATKDNGGKISFELNNKTLDATFKDAAYKLKNGDYTQTPVKVTDGYEVIKMINHPAKGTFTSSKKALTASVYAKWSRDSSIMQRVISQVLKNQHVTIKDKDLADALDSYKKLATTN</sequence>